<evidence type="ECO:0000255" key="1">
    <source>
        <dbReference type="HAMAP-Rule" id="MF_01545"/>
    </source>
</evidence>
<dbReference type="EMBL" id="CP000880">
    <property type="protein sequence ID" value="ABX24052.1"/>
    <property type="molecule type" value="Genomic_DNA"/>
</dbReference>
<dbReference type="SMR" id="A9MNX0"/>
<dbReference type="STRING" id="41514.SARI_04269"/>
<dbReference type="KEGG" id="ses:SARI_04269"/>
<dbReference type="HOGENOM" id="CLU_027647_0_0_6"/>
<dbReference type="Proteomes" id="UP000002084">
    <property type="component" value="Chromosome"/>
</dbReference>
<dbReference type="GO" id="GO:0005886">
    <property type="term" value="C:plasma membrane"/>
    <property type="evidence" value="ECO:0007669"/>
    <property type="project" value="UniProtKB-SubCell"/>
</dbReference>
<dbReference type="GO" id="GO:0022857">
    <property type="term" value="F:transmembrane transporter activity"/>
    <property type="evidence" value="ECO:0007669"/>
    <property type="project" value="UniProtKB-UniRule"/>
</dbReference>
<dbReference type="GO" id="GO:0046942">
    <property type="term" value="P:carboxylic acid transport"/>
    <property type="evidence" value="ECO:0007669"/>
    <property type="project" value="InterPro"/>
</dbReference>
<dbReference type="HAMAP" id="MF_01545">
    <property type="entry name" value="AaeB"/>
    <property type="match status" value="1"/>
</dbReference>
<dbReference type="InterPro" id="IPR006726">
    <property type="entry name" value="PHBA_efflux_AaeB/fusaric-R"/>
</dbReference>
<dbReference type="InterPro" id="IPR023706">
    <property type="entry name" value="PHBA_efflux_pump_AaeB"/>
</dbReference>
<dbReference type="NCBIfam" id="NF007916">
    <property type="entry name" value="PRK10631.1"/>
    <property type="match status" value="1"/>
</dbReference>
<dbReference type="PANTHER" id="PTHR30509:SF9">
    <property type="entry name" value="MULTIDRUG RESISTANCE PROTEIN MDTO"/>
    <property type="match status" value="1"/>
</dbReference>
<dbReference type="PANTHER" id="PTHR30509">
    <property type="entry name" value="P-HYDROXYBENZOIC ACID EFFLUX PUMP SUBUNIT-RELATED"/>
    <property type="match status" value="1"/>
</dbReference>
<dbReference type="Pfam" id="PF04632">
    <property type="entry name" value="FUSC"/>
    <property type="match status" value="1"/>
</dbReference>
<accession>A9MNX0</accession>
<gene>
    <name evidence="1" type="primary">aaeB</name>
    <name type="ordered locus">SARI_04269</name>
</gene>
<organism>
    <name type="scientific">Salmonella arizonae (strain ATCC BAA-731 / CDC346-86 / RSK2980)</name>
    <dbReference type="NCBI Taxonomy" id="41514"/>
    <lineage>
        <taxon>Bacteria</taxon>
        <taxon>Pseudomonadati</taxon>
        <taxon>Pseudomonadota</taxon>
        <taxon>Gammaproteobacteria</taxon>
        <taxon>Enterobacterales</taxon>
        <taxon>Enterobacteriaceae</taxon>
        <taxon>Salmonella</taxon>
    </lineage>
</organism>
<reference key="1">
    <citation type="submission" date="2007-11" db="EMBL/GenBank/DDBJ databases">
        <authorList>
            <consortium name="The Salmonella enterica serovar Arizonae Genome Sequencing Project"/>
            <person name="McClelland M."/>
            <person name="Sanderson E.K."/>
            <person name="Porwollik S."/>
            <person name="Spieth J."/>
            <person name="Clifton W.S."/>
            <person name="Fulton R."/>
            <person name="Chunyan W."/>
            <person name="Wollam A."/>
            <person name="Shah N."/>
            <person name="Pepin K."/>
            <person name="Bhonagiri V."/>
            <person name="Nash W."/>
            <person name="Johnson M."/>
            <person name="Thiruvilangam P."/>
            <person name="Wilson R."/>
        </authorList>
    </citation>
    <scope>NUCLEOTIDE SEQUENCE [LARGE SCALE GENOMIC DNA]</scope>
    <source>
        <strain>ATCC BAA-731 / CDC346-86 / RSK2980</strain>
    </source>
</reference>
<protein>
    <recommendedName>
        <fullName evidence="1">p-hydroxybenzoic acid efflux pump subunit AaeB</fullName>
        <shortName evidence="1">pHBA efflux pump protein B</shortName>
    </recommendedName>
</protein>
<feature type="chain" id="PRO_1000087665" description="p-hydroxybenzoic acid efflux pump subunit AaeB">
    <location>
        <begin position="1"/>
        <end position="655"/>
    </location>
</feature>
<feature type="transmembrane region" description="Helical" evidence="1">
    <location>
        <begin position="13"/>
        <end position="33"/>
    </location>
</feature>
<feature type="transmembrane region" description="Helical" evidence="1">
    <location>
        <begin position="38"/>
        <end position="58"/>
    </location>
</feature>
<feature type="transmembrane region" description="Helical" evidence="1">
    <location>
        <begin position="69"/>
        <end position="89"/>
    </location>
</feature>
<feature type="transmembrane region" description="Helical" evidence="1">
    <location>
        <begin position="93"/>
        <end position="113"/>
    </location>
</feature>
<feature type="transmembrane region" description="Helical" evidence="1">
    <location>
        <begin position="121"/>
        <end position="141"/>
    </location>
</feature>
<feature type="transmembrane region" description="Helical" evidence="1">
    <location>
        <begin position="152"/>
        <end position="172"/>
    </location>
</feature>
<feature type="transmembrane region" description="Helical" evidence="1">
    <location>
        <begin position="370"/>
        <end position="390"/>
    </location>
</feature>
<feature type="transmembrane region" description="Helical" evidence="1">
    <location>
        <begin position="407"/>
        <end position="427"/>
    </location>
</feature>
<feature type="transmembrane region" description="Helical" evidence="1">
    <location>
        <begin position="431"/>
        <end position="451"/>
    </location>
</feature>
<feature type="transmembrane region" description="Helical" evidence="1">
    <location>
        <begin position="459"/>
        <end position="479"/>
    </location>
</feature>
<feature type="transmembrane region" description="Helical" evidence="1">
    <location>
        <begin position="482"/>
        <end position="502"/>
    </location>
</feature>
<sequence>MGVFSIANQHIRFAVKLACAIVLALFIGFHFQLETPRWAVLTAAIVAAGPAFAAGGEPYSGAIRYRGMLRIIGTFIGCIAALIIIISMIRAPLLMILVCCVWAGFCTWISSLVRIENSYAWGLSGYTALIIVITIQTEPLLTPQFALERCSEIVIGIGCAILADLLFSPRSIKQEVDRELDSLLVAQYQLMQLCIKHGDSEEVDNAWGDLVRRTAALEGMRSNLNMESSRWVRANRRLKALNTLSLTLITQSCETYLIQNTRPELITDTFRELFETPVETVQDVHRQLKRMRRVIVWTGERETPVTLYSWVGAATRYLLLKRGVISNTKISATEEEILQGEPVVKVESAERHHAMVNFWRTTLSCVLGTLFWLWTGWTSGNGAMVMIAVVTSLAMRLPNPRMVCIDFIYGTLAALPLGLLYFLVIIPNTQQSMLLLCLSLAVLGFFIGIEVQKRRLGSMGALASTINIIVLDNPMTFHFSQFLDSALGQIVGCMLAFIVILLVRDKSKDRTGRVLLNQFVSAAVSAMTTNAARRKENRLPALYQQLFLLMNKFPGDLPKFRLALTMIIAHQRLRDAPIPVNEDLSVFHRQLRRTADHVISAGNDDKRRRYFGQLLDELDIYQEKLRIWEAPPQVTEPVKRLTGMLHKYQNALTDS</sequence>
<comment type="function">
    <text evidence="1">Forms an efflux pump with AaeA. Could function as a metabolic relief valve, allowing to eliminate certain compounds when they accumulate to high levels in the cell.</text>
</comment>
<comment type="subcellular location">
    <subcellularLocation>
        <location evidence="1">Cell inner membrane</location>
        <topology evidence="1">Multi-pass membrane protein</topology>
    </subcellularLocation>
</comment>
<comment type="similarity">
    <text evidence="1">Belongs to the aromatic acid exporter ArAE (TC 2.A.85) family.</text>
</comment>
<proteinExistence type="inferred from homology"/>
<name>AAEB_SALAR</name>
<keyword id="KW-0997">Cell inner membrane</keyword>
<keyword id="KW-1003">Cell membrane</keyword>
<keyword id="KW-0472">Membrane</keyword>
<keyword id="KW-1185">Reference proteome</keyword>
<keyword id="KW-0812">Transmembrane</keyword>
<keyword id="KW-1133">Transmembrane helix</keyword>
<keyword id="KW-0813">Transport</keyword>